<sequence>MSKDGLSNDQVSSMKEAFMLFDTDGDGKIAPSELGILMRSLGGNPTESQLKSIITTENLSSPFDFNRFLDLMAKHLKTEPFDRQLRDAFKVLDKEGTGFVAVADLRHILTSIGEKLQPSEFDEWIKEVDVGSDGKIRYEDFIARMVAK</sequence>
<gene>
    <name type="primary">CML14</name>
    <name type="ordered locus">At1g62820</name>
    <name type="ORF">F23N19.25</name>
</gene>
<protein>
    <recommendedName>
        <fullName>Probable calcium-binding protein CML14</fullName>
    </recommendedName>
    <alternativeName>
        <fullName>Calmodulin-like protein 14</fullName>
    </alternativeName>
</protein>
<organism>
    <name type="scientific">Arabidopsis thaliana</name>
    <name type="common">Mouse-ear cress</name>
    <dbReference type="NCBI Taxonomy" id="3702"/>
    <lineage>
        <taxon>Eukaryota</taxon>
        <taxon>Viridiplantae</taxon>
        <taxon>Streptophyta</taxon>
        <taxon>Embryophyta</taxon>
        <taxon>Tracheophyta</taxon>
        <taxon>Spermatophyta</taxon>
        <taxon>Magnoliopsida</taxon>
        <taxon>eudicotyledons</taxon>
        <taxon>Gunneridae</taxon>
        <taxon>Pentapetalae</taxon>
        <taxon>rosids</taxon>
        <taxon>malvids</taxon>
        <taxon>Brassicales</taxon>
        <taxon>Brassicaceae</taxon>
        <taxon>Camelineae</taxon>
        <taxon>Arabidopsis</taxon>
    </lineage>
</organism>
<accession>Q8VZ50</accession>
<accession>Q9SI68</accession>
<feature type="chain" id="PRO_0000342944" description="Probable calcium-binding protein CML14">
    <location>
        <begin position="1"/>
        <end position="148"/>
    </location>
</feature>
<feature type="domain" description="EF-hand 1" evidence="2">
    <location>
        <begin position="9"/>
        <end position="44"/>
    </location>
</feature>
<feature type="domain" description="EF-hand 2" evidence="2">
    <location>
        <begin position="80"/>
        <end position="115"/>
    </location>
</feature>
<feature type="domain" description="EF-hand 3" evidence="2">
    <location>
        <begin position="116"/>
        <end position="148"/>
    </location>
</feature>
<feature type="binding site" evidence="2">
    <location>
        <position position="22"/>
    </location>
    <ligand>
        <name>Ca(2+)</name>
        <dbReference type="ChEBI" id="CHEBI:29108"/>
    </ligand>
</feature>
<feature type="binding site" evidence="2">
    <location>
        <position position="24"/>
    </location>
    <ligand>
        <name>Ca(2+)</name>
        <dbReference type="ChEBI" id="CHEBI:29108"/>
    </ligand>
</feature>
<feature type="binding site" evidence="2">
    <location>
        <position position="26"/>
    </location>
    <ligand>
        <name>Ca(2+)</name>
        <dbReference type="ChEBI" id="CHEBI:29108"/>
    </ligand>
</feature>
<feature type="binding site" evidence="2">
    <location>
        <position position="28"/>
    </location>
    <ligand>
        <name>Ca(2+)</name>
        <dbReference type="ChEBI" id="CHEBI:29108"/>
    </ligand>
</feature>
<feature type="binding site" evidence="2">
    <location>
        <position position="33"/>
    </location>
    <ligand>
        <name>Ca(2+)</name>
        <dbReference type="ChEBI" id="CHEBI:29108"/>
    </ligand>
</feature>
<proteinExistence type="evidence at transcript level"/>
<evidence type="ECO:0000250" key="1"/>
<evidence type="ECO:0000255" key="2">
    <source>
        <dbReference type="PROSITE-ProRule" id="PRU00448"/>
    </source>
</evidence>
<evidence type="ECO:0000305" key="3"/>
<keyword id="KW-0106">Calcium</keyword>
<keyword id="KW-0479">Metal-binding</keyword>
<keyword id="KW-1185">Reference proteome</keyword>
<keyword id="KW-0677">Repeat</keyword>
<name>CML14_ARATH</name>
<reference key="1">
    <citation type="journal article" date="2000" name="Nature">
        <title>Sequence and analysis of chromosome 1 of the plant Arabidopsis thaliana.</title>
        <authorList>
            <person name="Theologis A."/>
            <person name="Ecker J.R."/>
            <person name="Palm C.J."/>
            <person name="Federspiel N.A."/>
            <person name="Kaul S."/>
            <person name="White O."/>
            <person name="Alonso J."/>
            <person name="Altafi H."/>
            <person name="Araujo R."/>
            <person name="Bowman C.L."/>
            <person name="Brooks S.Y."/>
            <person name="Buehler E."/>
            <person name="Chan A."/>
            <person name="Chao Q."/>
            <person name="Chen H."/>
            <person name="Cheuk R.F."/>
            <person name="Chin C.W."/>
            <person name="Chung M.K."/>
            <person name="Conn L."/>
            <person name="Conway A.B."/>
            <person name="Conway A.R."/>
            <person name="Creasy T.H."/>
            <person name="Dewar K."/>
            <person name="Dunn P."/>
            <person name="Etgu P."/>
            <person name="Feldblyum T.V."/>
            <person name="Feng J.-D."/>
            <person name="Fong B."/>
            <person name="Fujii C.Y."/>
            <person name="Gill J.E."/>
            <person name="Goldsmith A.D."/>
            <person name="Haas B."/>
            <person name="Hansen N.F."/>
            <person name="Hughes B."/>
            <person name="Huizar L."/>
            <person name="Hunter J.L."/>
            <person name="Jenkins J."/>
            <person name="Johnson-Hopson C."/>
            <person name="Khan S."/>
            <person name="Khaykin E."/>
            <person name="Kim C.J."/>
            <person name="Koo H.L."/>
            <person name="Kremenetskaia I."/>
            <person name="Kurtz D.B."/>
            <person name="Kwan A."/>
            <person name="Lam B."/>
            <person name="Langin-Hooper S."/>
            <person name="Lee A."/>
            <person name="Lee J.M."/>
            <person name="Lenz C.A."/>
            <person name="Li J.H."/>
            <person name="Li Y.-P."/>
            <person name="Lin X."/>
            <person name="Liu S.X."/>
            <person name="Liu Z.A."/>
            <person name="Luros J.S."/>
            <person name="Maiti R."/>
            <person name="Marziali A."/>
            <person name="Militscher J."/>
            <person name="Miranda M."/>
            <person name="Nguyen M."/>
            <person name="Nierman W.C."/>
            <person name="Osborne B.I."/>
            <person name="Pai G."/>
            <person name="Peterson J."/>
            <person name="Pham P.K."/>
            <person name="Rizzo M."/>
            <person name="Rooney T."/>
            <person name="Rowley D."/>
            <person name="Sakano H."/>
            <person name="Salzberg S.L."/>
            <person name="Schwartz J.R."/>
            <person name="Shinn P."/>
            <person name="Southwick A.M."/>
            <person name="Sun H."/>
            <person name="Tallon L.J."/>
            <person name="Tambunga G."/>
            <person name="Toriumi M.J."/>
            <person name="Town C.D."/>
            <person name="Utterback T."/>
            <person name="Van Aken S."/>
            <person name="Vaysberg M."/>
            <person name="Vysotskaia V.S."/>
            <person name="Walker M."/>
            <person name="Wu D."/>
            <person name="Yu G."/>
            <person name="Fraser C.M."/>
            <person name="Venter J.C."/>
            <person name="Davis R.W."/>
        </authorList>
    </citation>
    <scope>NUCLEOTIDE SEQUENCE [LARGE SCALE GENOMIC DNA]</scope>
    <source>
        <strain>cv. Columbia</strain>
    </source>
</reference>
<reference key="2">
    <citation type="journal article" date="2017" name="Plant J.">
        <title>Araport11: a complete reannotation of the Arabidopsis thaliana reference genome.</title>
        <authorList>
            <person name="Cheng C.Y."/>
            <person name="Krishnakumar V."/>
            <person name="Chan A.P."/>
            <person name="Thibaud-Nissen F."/>
            <person name="Schobel S."/>
            <person name="Town C.D."/>
        </authorList>
    </citation>
    <scope>GENOME REANNOTATION</scope>
    <source>
        <strain>cv. Columbia</strain>
    </source>
</reference>
<reference key="3">
    <citation type="journal article" date="2003" name="Science">
        <title>Empirical analysis of transcriptional activity in the Arabidopsis genome.</title>
        <authorList>
            <person name="Yamada K."/>
            <person name="Lim J."/>
            <person name="Dale J.M."/>
            <person name="Chen H."/>
            <person name="Shinn P."/>
            <person name="Palm C.J."/>
            <person name="Southwick A.M."/>
            <person name="Wu H.C."/>
            <person name="Kim C.J."/>
            <person name="Nguyen M."/>
            <person name="Pham P.K."/>
            <person name="Cheuk R.F."/>
            <person name="Karlin-Newmann G."/>
            <person name="Liu S.X."/>
            <person name="Lam B."/>
            <person name="Sakano H."/>
            <person name="Wu T."/>
            <person name="Yu G."/>
            <person name="Miranda M."/>
            <person name="Quach H.L."/>
            <person name="Tripp M."/>
            <person name="Chang C.H."/>
            <person name="Lee J.M."/>
            <person name="Toriumi M.J."/>
            <person name="Chan M.M."/>
            <person name="Tang C.C."/>
            <person name="Onodera C.S."/>
            <person name="Deng J.M."/>
            <person name="Akiyama K."/>
            <person name="Ansari Y."/>
            <person name="Arakawa T."/>
            <person name="Banh J."/>
            <person name="Banno F."/>
            <person name="Bowser L."/>
            <person name="Brooks S.Y."/>
            <person name="Carninci P."/>
            <person name="Chao Q."/>
            <person name="Choy N."/>
            <person name="Enju A."/>
            <person name="Goldsmith A.D."/>
            <person name="Gurjal M."/>
            <person name="Hansen N.F."/>
            <person name="Hayashizaki Y."/>
            <person name="Johnson-Hopson C."/>
            <person name="Hsuan V.W."/>
            <person name="Iida K."/>
            <person name="Karnes M."/>
            <person name="Khan S."/>
            <person name="Koesema E."/>
            <person name="Ishida J."/>
            <person name="Jiang P.X."/>
            <person name="Jones T."/>
            <person name="Kawai J."/>
            <person name="Kamiya A."/>
            <person name="Meyers C."/>
            <person name="Nakajima M."/>
            <person name="Narusaka M."/>
            <person name="Seki M."/>
            <person name="Sakurai T."/>
            <person name="Satou M."/>
            <person name="Tamse R."/>
            <person name="Vaysberg M."/>
            <person name="Wallender E.K."/>
            <person name="Wong C."/>
            <person name="Yamamura Y."/>
            <person name="Yuan S."/>
            <person name="Shinozaki K."/>
            <person name="Davis R.W."/>
            <person name="Theologis A."/>
            <person name="Ecker J.R."/>
        </authorList>
    </citation>
    <scope>NUCLEOTIDE SEQUENCE [LARGE SCALE MRNA]</scope>
    <source>
        <strain>cv. Columbia</strain>
    </source>
</reference>
<reference key="4">
    <citation type="journal article" date="2003" name="New Phytol.">
        <title>Calmodulins and related potential calcium sensors of Arabidopsis.</title>
        <authorList>
            <person name="McCormack E."/>
            <person name="Braam J."/>
        </authorList>
    </citation>
    <scope>GENE FAMILY</scope>
    <scope>NOMENCLATURE</scope>
</reference>
<dbReference type="EMBL" id="AC007190">
    <property type="protein sequence ID" value="AAF19542.1"/>
    <property type="status" value="ALT_SEQ"/>
    <property type="molecule type" value="Genomic_DNA"/>
</dbReference>
<dbReference type="EMBL" id="CP002684">
    <property type="protein sequence ID" value="AEE34009.1"/>
    <property type="molecule type" value="Genomic_DNA"/>
</dbReference>
<dbReference type="EMBL" id="AY065248">
    <property type="protein sequence ID" value="AAL38724.1"/>
    <property type="molecule type" value="mRNA"/>
</dbReference>
<dbReference type="EMBL" id="BT006063">
    <property type="protein sequence ID" value="AAP04048.1"/>
    <property type="molecule type" value="mRNA"/>
</dbReference>
<dbReference type="RefSeq" id="NP_176470.1">
    <property type="nucleotide sequence ID" value="NM_104960.4"/>
</dbReference>
<dbReference type="SMR" id="Q8VZ50"/>
<dbReference type="FunCoup" id="Q8VZ50">
    <property type="interactions" value="702"/>
</dbReference>
<dbReference type="IntAct" id="Q8VZ50">
    <property type="interactions" value="1"/>
</dbReference>
<dbReference type="STRING" id="3702.Q8VZ50"/>
<dbReference type="iPTMnet" id="Q8VZ50"/>
<dbReference type="MetOSite" id="Q8VZ50"/>
<dbReference type="PaxDb" id="3702-AT1G62820.1"/>
<dbReference type="ProteomicsDB" id="240989"/>
<dbReference type="EnsemblPlants" id="AT1G62820.1">
    <property type="protein sequence ID" value="AT1G62820.1"/>
    <property type="gene ID" value="AT1G62820"/>
</dbReference>
<dbReference type="GeneID" id="842581"/>
<dbReference type="Gramene" id="AT1G62820.1">
    <property type="protein sequence ID" value="AT1G62820.1"/>
    <property type="gene ID" value="AT1G62820"/>
</dbReference>
<dbReference type="KEGG" id="ath:AT1G62820"/>
<dbReference type="Araport" id="AT1G62820"/>
<dbReference type="TAIR" id="AT1G62820">
    <property type="gene designation" value="CML14"/>
</dbReference>
<dbReference type="eggNOG" id="KOG0027">
    <property type="taxonomic scope" value="Eukaryota"/>
</dbReference>
<dbReference type="HOGENOM" id="CLU_061288_2_0_1"/>
<dbReference type="InParanoid" id="Q8VZ50"/>
<dbReference type="OMA" id="MGNDEQV"/>
<dbReference type="OrthoDB" id="26525at2759"/>
<dbReference type="PhylomeDB" id="Q8VZ50"/>
<dbReference type="CD-CODE" id="4299E36E">
    <property type="entry name" value="Nucleolus"/>
</dbReference>
<dbReference type="PRO" id="PR:Q8VZ50"/>
<dbReference type="Proteomes" id="UP000006548">
    <property type="component" value="Chromosome 1"/>
</dbReference>
<dbReference type="ExpressionAtlas" id="Q8VZ50">
    <property type="expression patterns" value="baseline and differential"/>
</dbReference>
<dbReference type="GO" id="GO:0005829">
    <property type="term" value="C:cytosol"/>
    <property type="evidence" value="ECO:0007005"/>
    <property type="project" value="TAIR"/>
</dbReference>
<dbReference type="GO" id="GO:0005634">
    <property type="term" value="C:nucleus"/>
    <property type="evidence" value="ECO:0007005"/>
    <property type="project" value="TAIR"/>
</dbReference>
<dbReference type="GO" id="GO:0005509">
    <property type="term" value="F:calcium ion binding"/>
    <property type="evidence" value="ECO:0007669"/>
    <property type="project" value="InterPro"/>
</dbReference>
<dbReference type="CDD" id="cd00051">
    <property type="entry name" value="EFh"/>
    <property type="match status" value="1"/>
</dbReference>
<dbReference type="FunFam" id="1.10.238.10:FF:000082">
    <property type="entry name" value="Myosin light chain 1"/>
    <property type="match status" value="1"/>
</dbReference>
<dbReference type="FunFam" id="1.10.238.10:FF:000143">
    <property type="entry name" value="probable calcium-binding protein CML13"/>
    <property type="match status" value="1"/>
</dbReference>
<dbReference type="Gene3D" id="1.10.238.10">
    <property type="entry name" value="EF-hand"/>
    <property type="match status" value="2"/>
</dbReference>
<dbReference type="InterPro" id="IPR050230">
    <property type="entry name" value="CALM/Myosin/TropC-like"/>
</dbReference>
<dbReference type="InterPro" id="IPR011992">
    <property type="entry name" value="EF-hand-dom_pair"/>
</dbReference>
<dbReference type="InterPro" id="IPR018247">
    <property type="entry name" value="EF_Hand_1_Ca_BS"/>
</dbReference>
<dbReference type="InterPro" id="IPR002048">
    <property type="entry name" value="EF_hand_dom"/>
</dbReference>
<dbReference type="PANTHER" id="PTHR23048:SF0">
    <property type="entry name" value="CALMODULIN LIKE 3"/>
    <property type="match status" value="1"/>
</dbReference>
<dbReference type="PANTHER" id="PTHR23048">
    <property type="entry name" value="MYOSIN LIGHT CHAIN 1, 3"/>
    <property type="match status" value="1"/>
</dbReference>
<dbReference type="Pfam" id="PF13405">
    <property type="entry name" value="EF-hand_6"/>
    <property type="match status" value="1"/>
</dbReference>
<dbReference type="Pfam" id="PF13499">
    <property type="entry name" value="EF-hand_7"/>
    <property type="match status" value="1"/>
</dbReference>
<dbReference type="SMART" id="SM00054">
    <property type="entry name" value="EFh"/>
    <property type="match status" value="3"/>
</dbReference>
<dbReference type="SUPFAM" id="SSF47473">
    <property type="entry name" value="EF-hand"/>
    <property type="match status" value="1"/>
</dbReference>
<dbReference type="PROSITE" id="PS00018">
    <property type="entry name" value="EF_HAND_1"/>
    <property type="match status" value="1"/>
</dbReference>
<dbReference type="PROSITE" id="PS50222">
    <property type="entry name" value="EF_HAND_2"/>
    <property type="match status" value="3"/>
</dbReference>
<comment type="function">
    <text evidence="1">Potential calcium sensor.</text>
</comment>
<comment type="caution">
    <text evidence="3">Although assigned as a calmodulin family member by Ref.4, it only contains EF-hand domains.</text>
</comment>
<comment type="sequence caution" evidence="3">
    <conflict type="erroneous gene model prediction">
        <sequence resource="EMBL-CDS" id="AAF19542"/>
    </conflict>
    <text>The predicted gene has been split into 3 genes: At1g62810, At1g62820 and At1g62830.</text>
</comment>